<evidence type="ECO:0000255" key="1">
    <source>
        <dbReference type="HAMAP-Rule" id="MF_01503"/>
    </source>
</evidence>
<comment type="similarity">
    <text evidence="1">Belongs to the RemA family.</text>
</comment>
<protein>
    <recommendedName>
        <fullName evidence="1">Putative regulatory protein Kole_1849</fullName>
    </recommendedName>
</protein>
<feature type="chain" id="PRO_1000215329" description="Putative regulatory protein Kole_1849">
    <location>
        <begin position="1"/>
        <end position="99"/>
    </location>
</feature>
<reference key="1">
    <citation type="submission" date="2009-06" db="EMBL/GenBank/DDBJ databases">
        <title>Complete sequence of Thermotogales bacterium TBF 19.5.1.</title>
        <authorList>
            <consortium name="US DOE Joint Genome Institute"/>
            <person name="Lucas S."/>
            <person name="Copeland A."/>
            <person name="Lapidus A."/>
            <person name="Glavina del Rio T."/>
            <person name="Tice H."/>
            <person name="Bruce D."/>
            <person name="Goodwin L."/>
            <person name="Pitluck S."/>
            <person name="Chertkov O."/>
            <person name="Brettin T."/>
            <person name="Detter J.C."/>
            <person name="Han C."/>
            <person name="Schmutz J."/>
            <person name="Larimer F."/>
            <person name="Land M."/>
            <person name="Hauser L."/>
            <person name="Kyrpides N."/>
            <person name="Ovchinnikova G."/>
            <person name="Noll K."/>
        </authorList>
    </citation>
    <scope>NUCLEOTIDE SEQUENCE [LARGE SCALE GENOMIC DNA]</scope>
    <source>
        <strain>ATCC BAA-1733 / DSM 21960 / TBF 19.5.1</strain>
    </source>
</reference>
<proteinExistence type="inferred from homology"/>
<gene>
    <name type="ordered locus">Kole_1849</name>
</gene>
<accession>C5CGF0</accession>
<sequence>MYGLINVGFGNVIIGDRVIAIVNPESAPLKRLKEVAKEEGKLIDATYGRKTRAIVITDSNHVILSAIQPETIASRFMQTFTDIEKLLEEIRQAERRTEE</sequence>
<name>Y1849_KOSOT</name>
<organism>
    <name type="scientific">Kosmotoga olearia (strain ATCC BAA-1733 / DSM 21960 / TBF 19.5.1)</name>
    <dbReference type="NCBI Taxonomy" id="521045"/>
    <lineage>
        <taxon>Bacteria</taxon>
        <taxon>Thermotogati</taxon>
        <taxon>Thermotogota</taxon>
        <taxon>Thermotogae</taxon>
        <taxon>Kosmotogales</taxon>
        <taxon>Kosmotogaceae</taxon>
        <taxon>Kosmotoga</taxon>
    </lineage>
</organism>
<keyword id="KW-1185">Reference proteome</keyword>
<dbReference type="EMBL" id="CP001634">
    <property type="protein sequence ID" value="ACR80531.1"/>
    <property type="molecule type" value="Genomic_DNA"/>
</dbReference>
<dbReference type="RefSeq" id="WP_015869174.1">
    <property type="nucleotide sequence ID" value="NC_012785.1"/>
</dbReference>
<dbReference type="SMR" id="C5CGF0"/>
<dbReference type="STRING" id="521045.Kole_1849"/>
<dbReference type="KEGG" id="kol:Kole_1849"/>
<dbReference type="eggNOG" id="COG2052">
    <property type="taxonomic scope" value="Bacteria"/>
</dbReference>
<dbReference type="HOGENOM" id="CLU_165326_0_0_0"/>
<dbReference type="OrthoDB" id="5432174at2"/>
<dbReference type="Proteomes" id="UP000002382">
    <property type="component" value="Chromosome"/>
</dbReference>
<dbReference type="HAMAP" id="MF_01503">
    <property type="entry name" value="RemA"/>
    <property type="match status" value="1"/>
</dbReference>
<dbReference type="InterPro" id="IPR007169">
    <property type="entry name" value="RemA-like"/>
</dbReference>
<dbReference type="NCBIfam" id="NF003315">
    <property type="entry name" value="PRK04323.1"/>
    <property type="match status" value="1"/>
</dbReference>
<dbReference type="PANTHER" id="PTHR38449:SF1">
    <property type="entry name" value="REGULATORY PROTEIN SSL2874-RELATED"/>
    <property type="match status" value="1"/>
</dbReference>
<dbReference type="PANTHER" id="PTHR38449">
    <property type="entry name" value="REGULATORY PROTEIN TM_1690-RELATED"/>
    <property type="match status" value="1"/>
</dbReference>
<dbReference type="Pfam" id="PF04025">
    <property type="entry name" value="RemA-like"/>
    <property type="match status" value="1"/>
</dbReference>